<feature type="chain" id="PRO_1000097385" description="Thymidylate kinase">
    <location>
        <begin position="1"/>
        <end position="217"/>
    </location>
</feature>
<feature type="binding site" evidence="1">
    <location>
        <begin position="7"/>
        <end position="14"/>
    </location>
    <ligand>
        <name>ATP</name>
        <dbReference type="ChEBI" id="CHEBI:30616"/>
    </ligand>
</feature>
<name>KTHY_CHLP8</name>
<comment type="function">
    <text evidence="1">Phosphorylation of dTMP to form dTDP in both de novo and salvage pathways of dTTP synthesis.</text>
</comment>
<comment type="catalytic activity">
    <reaction evidence="1">
        <text>dTMP + ATP = dTDP + ADP</text>
        <dbReference type="Rhea" id="RHEA:13517"/>
        <dbReference type="ChEBI" id="CHEBI:30616"/>
        <dbReference type="ChEBI" id="CHEBI:58369"/>
        <dbReference type="ChEBI" id="CHEBI:63528"/>
        <dbReference type="ChEBI" id="CHEBI:456216"/>
        <dbReference type="EC" id="2.7.4.9"/>
    </reaction>
</comment>
<comment type="similarity">
    <text evidence="1">Belongs to the thymidylate kinase family.</text>
</comment>
<proteinExistence type="inferred from homology"/>
<dbReference type="EC" id="2.7.4.9" evidence="1"/>
<dbReference type="EMBL" id="CP001099">
    <property type="protein sequence ID" value="ACF11734.1"/>
    <property type="molecule type" value="Genomic_DNA"/>
</dbReference>
<dbReference type="RefSeq" id="WP_012502567.1">
    <property type="nucleotide sequence ID" value="NC_011027.1"/>
</dbReference>
<dbReference type="SMR" id="B3QP81"/>
<dbReference type="STRING" id="517417.Cpar_1331"/>
<dbReference type="KEGG" id="cpc:Cpar_1331"/>
<dbReference type="eggNOG" id="COG0125">
    <property type="taxonomic scope" value="Bacteria"/>
</dbReference>
<dbReference type="HOGENOM" id="CLU_049131_0_2_10"/>
<dbReference type="OrthoDB" id="9774907at2"/>
<dbReference type="Proteomes" id="UP000008811">
    <property type="component" value="Chromosome"/>
</dbReference>
<dbReference type="GO" id="GO:0005829">
    <property type="term" value="C:cytosol"/>
    <property type="evidence" value="ECO:0007669"/>
    <property type="project" value="TreeGrafter"/>
</dbReference>
<dbReference type="GO" id="GO:0005524">
    <property type="term" value="F:ATP binding"/>
    <property type="evidence" value="ECO:0007669"/>
    <property type="project" value="UniProtKB-UniRule"/>
</dbReference>
<dbReference type="GO" id="GO:0004798">
    <property type="term" value="F:dTMP kinase activity"/>
    <property type="evidence" value="ECO:0007669"/>
    <property type="project" value="UniProtKB-UniRule"/>
</dbReference>
<dbReference type="GO" id="GO:0006233">
    <property type="term" value="P:dTDP biosynthetic process"/>
    <property type="evidence" value="ECO:0007669"/>
    <property type="project" value="InterPro"/>
</dbReference>
<dbReference type="GO" id="GO:0006235">
    <property type="term" value="P:dTTP biosynthetic process"/>
    <property type="evidence" value="ECO:0007669"/>
    <property type="project" value="UniProtKB-UniRule"/>
</dbReference>
<dbReference type="GO" id="GO:0006227">
    <property type="term" value="P:dUDP biosynthetic process"/>
    <property type="evidence" value="ECO:0007669"/>
    <property type="project" value="TreeGrafter"/>
</dbReference>
<dbReference type="CDD" id="cd01672">
    <property type="entry name" value="TMPK"/>
    <property type="match status" value="1"/>
</dbReference>
<dbReference type="FunFam" id="3.40.50.300:FF:000225">
    <property type="entry name" value="Thymidylate kinase"/>
    <property type="match status" value="1"/>
</dbReference>
<dbReference type="Gene3D" id="3.40.50.300">
    <property type="entry name" value="P-loop containing nucleotide triphosphate hydrolases"/>
    <property type="match status" value="1"/>
</dbReference>
<dbReference type="HAMAP" id="MF_00165">
    <property type="entry name" value="Thymidylate_kinase"/>
    <property type="match status" value="1"/>
</dbReference>
<dbReference type="InterPro" id="IPR027417">
    <property type="entry name" value="P-loop_NTPase"/>
</dbReference>
<dbReference type="InterPro" id="IPR039430">
    <property type="entry name" value="Thymidylate_kin-like_dom"/>
</dbReference>
<dbReference type="InterPro" id="IPR018095">
    <property type="entry name" value="Thymidylate_kin_CS"/>
</dbReference>
<dbReference type="InterPro" id="IPR018094">
    <property type="entry name" value="Thymidylate_kinase"/>
</dbReference>
<dbReference type="NCBIfam" id="TIGR00041">
    <property type="entry name" value="DTMP_kinase"/>
    <property type="match status" value="1"/>
</dbReference>
<dbReference type="PANTHER" id="PTHR10344">
    <property type="entry name" value="THYMIDYLATE KINASE"/>
    <property type="match status" value="1"/>
</dbReference>
<dbReference type="PANTHER" id="PTHR10344:SF4">
    <property type="entry name" value="UMP-CMP KINASE 2, MITOCHONDRIAL"/>
    <property type="match status" value="1"/>
</dbReference>
<dbReference type="Pfam" id="PF02223">
    <property type="entry name" value="Thymidylate_kin"/>
    <property type="match status" value="1"/>
</dbReference>
<dbReference type="SUPFAM" id="SSF52540">
    <property type="entry name" value="P-loop containing nucleoside triphosphate hydrolases"/>
    <property type="match status" value="1"/>
</dbReference>
<dbReference type="PROSITE" id="PS01331">
    <property type="entry name" value="THYMIDYLATE_KINASE"/>
    <property type="match status" value="1"/>
</dbReference>
<organism>
    <name type="scientific">Chlorobaculum parvum (strain DSM 263 / NCIMB 8327)</name>
    <name type="common">Chlorobium vibrioforme subsp. thiosulfatophilum</name>
    <dbReference type="NCBI Taxonomy" id="517417"/>
    <lineage>
        <taxon>Bacteria</taxon>
        <taxon>Pseudomonadati</taxon>
        <taxon>Chlorobiota</taxon>
        <taxon>Chlorobiia</taxon>
        <taxon>Chlorobiales</taxon>
        <taxon>Chlorobiaceae</taxon>
        <taxon>Chlorobaculum</taxon>
    </lineage>
</organism>
<evidence type="ECO:0000255" key="1">
    <source>
        <dbReference type="HAMAP-Rule" id="MF_00165"/>
    </source>
</evidence>
<sequence>MLITFEGIDGAGKSTQVVKLKRHLQERGREVLTLREPGGTPVAEQIRELLLESHNDITSIAELLLFSASRAELMEKIIVPALEDGCDVILDRFFDSTTAYQGYGRGLNLDMLAEINRIASHGIRPDITFYLDLTPEDALLRKFSEKSLPLAFESEELDRMENSGLEFYQRVRAGYHAILEAEPQRIIMIDALLTPQEIHRKILSALQALEVPEDGKR</sequence>
<reference key="1">
    <citation type="submission" date="2008-06" db="EMBL/GenBank/DDBJ databases">
        <title>Complete sequence of Chlorobaculum parvum NCIB 8327.</title>
        <authorList>
            <consortium name="US DOE Joint Genome Institute"/>
            <person name="Lucas S."/>
            <person name="Copeland A."/>
            <person name="Lapidus A."/>
            <person name="Glavina del Rio T."/>
            <person name="Dalin E."/>
            <person name="Tice H."/>
            <person name="Bruce D."/>
            <person name="Goodwin L."/>
            <person name="Pitluck S."/>
            <person name="Schmutz J."/>
            <person name="Larimer F."/>
            <person name="Land M."/>
            <person name="Hauser L."/>
            <person name="Kyrpides N."/>
            <person name="Mikhailova N."/>
            <person name="Zhao F."/>
            <person name="Li T."/>
            <person name="Liu Z."/>
            <person name="Overmann J."/>
            <person name="Bryant D.A."/>
            <person name="Richardson P."/>
        </authorList>
    </citation>
    <scope>NUCLEOTIDE SEQUENCE [LARGE SCALE GENOMIC DNA]</scope>
    <source>
        <strain>DSM 263 / NCIMB 8327</strain>
    </source>
</reference>
<accession>B3QP81</accession>
<protein>
    <recommendedName>
        <fullName evidence="1">Thymidylate kinase</fullName>
        <ecNumber evidence="1">2.7.4.9</ecNumber>
    </recommendedName>
    <alternativeName>
        <fullName evidence="1">dTMP kinase</fullName>
    </alternativeName>
</protein>
<gene>
    <name evidence="1" type="primary">tmk</name>
    <name type="ordered locus">Cpar_1331</name>
</gene>
<keyword id="KW-0067">ATP-binding</keyword>
<keyword id="KW-0418">Kinase</keyword>
<keyword id="KW-0545">Nucleotide biosynthesis</keyword>
<keyword id="KW-0547">Nucleotide-binding</keyword>
<keyword id="KW-0808">Transferase</keyword>